<accession>Q89B11</accession>
<evidence type="ECO:0000250" key="1"/>
<evidence type="ECO:0000305" key="2"/>
<dbReference type="EC" id="2.3.1.30"/>
<dbReference type="EMBL" id="AE016826">
    <property type="protein sequence ID" value="AAO26790.1"/>
    <property type="molecule type" value="Genomic_DNA"/>
</dbReference>
<dbReference type="SMR" id="Q89B11"/>
<dbReference type="STRING" id="224915.bbp_051"/>
<dbReference type="KEGG" id="bab:bbp_051"/>
<dbReference type="eggNOG" id="COG1045">
    <property type="taxonomic scope" value="Bacteria"/>
</dbReference>
<dbReference type="HOGENOM" id="CLU_051638_0_1_6"/>
<dbReference type="OrthoDB" id="9801456at2"/>
<dbReference type="UniPathway" id="UPA00136">
    <property type="reaction ID" value="UER00199"/>
</dbReference>
<dbReference type="Proteomes" id="UP000000601">
    <property type="component" value="Chromosome"/>
</dbReference>
<dbReference type="GO" id="GO:0005737">
    <property type="term" value="C:cytoplasm"/>
    <property type="evidence" value="ECO:0007669"/>
    <property type="project" value="UniProtKB-SubCell"/>
</dbReference>
<dbReference type="GO" id="GO:0009001">
    <property type="term" value="F:serine O-acetyltransferase activity"/>
    <property type="evidence" value="ECO:0007669"/>
    <property type="project" value="UniProtKB-EC"/>
</dbReference>
<dbReference type="GO" id="GO:0006535">
    <property type="term" value="P:cysteine biosynthetic process from serine"/>
    <property type="evidence" value="ECO:0007669"/>
    <property type="project" value="InterPro"/>
</dbReference>
<dbReference type="CDD" id="cd03354">
    <property type="entry name" value="LbH_SAT"/>
    <property type="match status" value="1"/>
</dbReference>
<dbReference type="Gene3D" id="2.160.10.10">
    <property type="entry name" value="Hexapeptide repeat proteins"/>
    <property type="match status" value="1"/>
</dbReference>
<dbReference type="Gene3D" id="1.10.3130.10">
    <property type="entry name" value="serine acetyltransferase, domain 1"/>
    <property type="match status" value="1"/>
</dbReference>
<dbReference type="InterPro" id="IPR001451">
    <property type="entry name" value="Hexapep"/>
</dbReference>
<dbReference type="InterPro" id="IPR045304">
    <property type="entry name" value="LbH_SAT"/>
</dbReference>
<dbReference type="InterPro" id="IPR010493">
    <property type="entry name" value="Ser_AcTrfase_N"/>
</dbReference>
<dbReference type="InterPro" id="IPR042122">
    <property type="entry name" value="Ser_AcTrfase_N_sf"/>
</dbReference>
<dbReference type="InterPro" id="IPR011004">
    <property type="entry name" value="Trimer_LpxA-like_sf"/>
</dbReference>
<dbReference type="PANTHER" id="PTHR42811">
    <property type="entry name" value="SERINE ACETYLTRANSFERASE"/>
    <property type="match status" value="1"/>
</dbReference>
<dbReference type="Pfam" id="PF00132">
    <property type="entry name" value="Hexapep"/>
    <property type="match status" value="1"/>
</dbReference>
<dbReference type="Pfam" id="PF06426">
    <property type="entry name" value="SATase_N"/>
    <property type="match status" value="1"/>
</dbReference>
<dbReference type="SMART" id="SM00971">
    <property type="entry name" value="SATase_N"/>
    <property type="match status" value="1"/>
</dbReference>
<dbReference type="SUPFAM" id="SSF51161">
    <property type="entry name" value="Trimeric LpxA-like enzymes"/>
    <property type="match status" value="1"/>
</dbReference>
<feature type="chain" id="PRO_0000068668" description="Serine acetyltransferase">
    <location>
        <begin position="1"/>
        <end position="254"/>
    </location>
</feature>
<name>CYSE_BUCBP</name>
<gene>
    <name type="primary">cysE</name>
    <name type="ordered locus">bbp_051</name>
</gene>
<comment type="catalytic activity">
    <reaction>
        <text>L-serine + acetyl-CoA = O-acetyl-L-serine + CoA</text>
        <dbReference type="Rhea" id="RHEA:24560"/>
        <dbReference type="ChEBI" id="CHEBI:33384"/>
        <dbReference type="ChEBI" id="CHEBI:57287"/>
        <dbReference type="ChEBI" id="CHEBI:57288"/>
        <dbReference type="ChEBI" id="CHEBI:58340"/>
        <dbReference type="EC" id="2.3.1.30"/>
    </reaction>
</comment>
<comment type="pathway">
    <text>Amino-acid biosynthesis; L-cysteine biosynthesis; L-cysteine from L-serine: step 1/2.</text>
</comment>
<comment type="subcellular location">
    <subcellularLocation>
        <location evidence="1">Cytoplasm</location>
    </subcellularLocation>
</comment>
<comment type="similarity">
    <text evidence="2">Belongs to the transferase hexapeptide repeat family.</text>
</comment>
<sequence>MIMSSKEVEIIWHQIISEVEILMDQEPELAGFYHAYILQHDSFDMALSYILSNQLSNKVMSTVFVRDIINKVYIACRKIVAYAIQDIKALFNHGLVHCYSFSLLHSKGFHALQAYRISNFLWCEEKKSLALYFQNRISCLFSVDIHPASMIGSGIVLDNAIGITIGQTSAIKDSVSVLSQSLALLGSAFKISSVQCPKINEGVIIGANVAILGNVVIGEKTKIQACTVVLQSVPPNSIVTSVLAKIVSFKNINE</sequence>
<protein>
    <recommendedName>
        <fullName>Serine acetyltransferase</fullName>
        <shortName>SAT</shortName>
        <ecNumber>2.3.1.30</ecNumber>
    </recommendedName>
</protein>
<proteinExistence type="inferred from homology"/>
<reference key="1">
    <citation type="journal article" date="2003" name="Proc. Natl. Acad. Sci. U.S.A.">
        <title>Reductive genome evolution in Buchnera aphidicola.</title>
        <authorList>
            <person name="van Ham R.C.H.J."/>
            <person name="Kamerbeek J."/>
            <person name="Palacios C."/>
            <person name="Rausell C."/>
            <person name="Abascal F."/>
            <person name="Bastolla U."/>
            <person name="Fernandez J.M."/>
            <person name="Jimenez L."/>
            <person name="Postigo M."/>
            <person name="Silva F.J."/>
            <person name="Tamames J."/>
            <person name="Viguera E."/>
            <person name="Latorre A."/>
            <person name="Valencia A."/>
            <person name="Moran F."/>
            <person name="Moya A."/>
        </authorList>
    </citation>
    <scope>NUCLEOTIDE SEQUENCE [LARGE SCALE GENOMIC DNA]</scope>
    <source>
        <strain>Bp</strain>
    </source>
</reference>
<keyword id="KW-0012">Acyltransferase</keyword>
<keyword id="KW-0028">Amino-acid biosynthesis</keyword>
<keyword id="KW-0198">Cysteine biosynthesis</keyword>
<keyword id="KW-0963">Cytoplasm</keyword>
<keyword id="KW-1185">Reference proteome</keyword>
<keyword id="KW-0677">Repeat</keyword>
<keyword id="KW-0808">Transferase</keyword>
<organism>
    <name type="scientific">Buchnera aphidicola subsp. Baizongia pistaciae (strain Bp)</name>
    <dbReference type="NCBI Taxonomy" id="224915"/>
    <lineage>
        <taxon>Bacteria</taxon>
        <taxon>Pseudomonadati</taxon>
        <taxon>Pseudomonadota</taxon>
        <taxon>Gammaproteobacteria</taxon>
        <taxon>Enterobacterales</taxon>
        <taxon>Erwiniaceae</taxon>
        <taxon>Buchnera</taxon>
    </lineage>
</organism>